<dbReference type="EC" id="2.7.7.6" evidence="1"/>
<dbReference type="EMBL" id="CP000095">
    <property type="protein sequence ID" value="AAZ58596.1"/>
    <property type="molecule type" value="Genomic_DNA"/>
</dbReference>
<dbReference type="RefSeq" id="WP_011295450.1">
    <property type="nucleotide sequence ID" value="NC_007335.2"/>
</dbReference>
<dbReference type="SMR" id="Q46IT2"/>
<dbReference type="STRING" id="59920.PMN2A_1106"/>
<dbReference type="KEGG" id="pmn:PMN2A_1106"/>
<dbReference type="HOGENOM" id="CLU_053084_0_1_3"/>
<dbReference type="OrthoDB" id="9805706at2"/>
<dbReference type="PhylomeDB" id="Q46IT2"/>
<dbReference type="Proteomes" id="UP000002535">
    <property type="component" value="Chromosome"/>
</dbReference>
<dbReference type="GO" id="GO:0005737">
    <property type="term" value="C:cytoplasm"/>
    <property type="evidence" value="ECO:0007669"/>
    <property type="project" value="UniProtKB-ARBA"/>
</dbReference>
<dbReference type="GO" id="GO:0000428">
    <property type="term" value="C:DNA-directed RNA polymerase complex"/>
    <property type="evidence" value="ECO:0007669"/>
    <property type="project" value="UniProtKB-KW"/>
</dbReference>
<dbReference type="GO" id="GO:0003677">
    <property type="term" value="F:DNA binding"/>
    <property type="evidence" value="ECO:0007669"/>
    <property type="project" value="UniProtKB-UniRule"/>
</dbReference>
<dbReference type="GO" id="GO:0003899">
    <property type="term" value="F:DNA-directed RNA polymerase activity"/>
    <property type="evidence" value="ECO:0007669"/>
    <property type="project" value="UniProtKB-UniRule"/>
</dbReference>
<dbReference type="GO" id="GO:0046983">
    <property type="term" value="F:protein dimerization activity"/>
    <property type="evidence" value="ECO:0007669"/>
    <property type="project" value="InterPro"/>
</dbReference>
<dbReference type="GO" id="GO:0006351">
    <property type="term" value="P:DNA-templated transcription"/>
    <property type="evidence" value="ECO:0007669"/>
    <property type="project" value="UniProtKB-UniRule"/>
</dbReference>
<dbReference type="CDD" id="cd06928">
    <property type="entry name" value="RNAP_alpha_NTD"/>
    <property type="match status" value="1"/>
</dbReference>
<dbReference type="FunFam" id="2.170.120.12:FF:000001">
    <property type="entry name" value="DNA-directed RNA polymerase subunit alpha"/>
    <property type="match status" value="1"/>
</dbReference>
<dbReference type="Gene3D" id="1.10.150.20">
    <property type="entry name" value="5' to 3' exonuclease, C-terminal subdomain"/>
    <property type="match status" value="1"/>
</dbReference>
<dbReference type="Gene3D" id="2.170.120.12">
    <property type="entry name" value="DNA-directed RNA polymerase, insert domain"/>
    <property type="match status" value="1"/>
</dbReference>
<dbReference type="Gene3D" id="3.30.1360.10">
    <property type="entry name" value="RNA polymerase, RBP11-like subunit"/>
    <property type="match status" value="1"/>
</dbReference>
<dbReference type="HAMAP" id="MF_00059">
    <property type="entry name" value="RNApol_bact_RpoA"/>
    <property type="match status" value="1"/>
</dbReference>
<dbReference type="InterPro" id="IPR011262">
    <property type="entry name" value="DNA-dir_RNA_pol_insert"/>
</dbReference>
<dbReference type="InterPro" id="IPR011263">
    <property type="entry name" value="DNA-dir_RNA_pol_RpoA/D/Rpb3"/>
</dbReference>
<dbReference type="InterPro" id="IPR011773">
    <property type="entry name" value="DNA-dir_RpoA"/>
</dbReference>
<dbReference type="InterPro" id="IPR036603">
    <property type="entry name" value="RBP11-like"/>
</dbReference>
<dbReference type="InterPro" id="IPR011260">
    <property type="entry name" value="RNAP_asu_C"/>
</dbReference>
<dbReference type="InterPro" id="IPR036643">
    <property type="entry name" value="RNApol_insert_sf"/>
</dbReference>
<dbReference type="NCBIfam" id="NF003516">
    <property type="entry name" value="PRK05182.2-2"/>
    <property type="match status" value="1"/>
</dbReference>
<dbReference type="NCBIfam" id="NF003519">
    <property type="entry name" value="PRK05182.2-5"/>
    <property type="match status" value="1"/>
</dbReference>
<dbReference type="NCBIfam" id="TIGR02027">
    <property type="entry name" value="rpoA"/>
    <property type="match status" value="1"/>
</dbReference>
<dbReference type="Pfam" id="PF01000">
    <property type="entry name" value="RNA_pol_A_bac"/>
    <property type="match status" value="1"/>
</dbReference>
<dbReference type="Pfam" id="PF03118">
    <property type="entry name" value="RNA_pol_A_CTD"/>
    <property type="match status" value="1"/>
</dbReference>
<dbReference type="Pfam" id="PF01193">
    <property type="entry name" value="RNA_pol_L"/>
    <property type="match status" value="1"/>
</dbReference>
<dbReference type="SMART" id="SM00662">
    <property type="entry name" value="RPOLD"/>
    <property type="match status" value="1"/>
</dbReference>
<dbReference type="SUPFAM" id="SSF47789">
    <property type="entry name" value="C-terminal domain of RNA polymerase alpha subunit"/>
    <property type="match status" value="1"/>
</dbReference>
<dbReference type="SUPFAM" id="SSF56553">
    <property type="entry name" value="Insert subdomain of RNA polymerase alpha subunit"/>
    <property type="match status" value="1"/>
</dbReference>
<dbReference type="SUPFAM" id="SSF55257">
    <property type="entry name" value="RBP11-like subunits of RNA polymerase"/>
    <property type="match status" value="1"/>
</dbReference>
<proteinExistence type="inferred from homology"/>
<name>RPOA_PROMT</name>
<accession>Q46IT2</accession>
<evidence type="ECO:0000255" key="1">
    <source>
        <dbReference type="HAMAP-Rule" id="MF_00059"/>
    </source>
</evidence>
<gene>
    <name evidence="1" type="primary">rpoA</name>
    <name type="ordered locus">PMN2A_1106</name>
</gene>
<comment type="function">
    <text evidence="1">DNA-dependent RNA polymerase catalyzes the transcription of DNA into RNA using the four ribonucleoside triphosphates as substrates.</text>
</comment>
<comment type="catalytic activity">
    <reaction evidence="1">
        <text>RNA(n) + a ribonucleoside 5'-triphosphate = RNA(n+1) + diphosphate</text>
        <dbReference type="Rhea" id="RHEA:21248"/>
        <dbReference type="Rhea" id="RHEA-COMP:14527"/>
        <dbReference type="Rhea" id="RHEA-COMP:17342"/>
        <dbReference type="ChEBI" id="CHEBI:33019"/>
        <dbReference type="ChEBI" id="CHEBI:61557"/>
        <dbReference type="ChEBI" id="CHEBI:140395"/>
        <dbReference type="EC" id="2.7.7.6"/>
    </reaction>
</comment>
<comment type="subunit">
    <text evidence="1">In cyanobacteria the RNAP catalytic core is composed of 2 alpha, 1 beta, 1 beta', 1 gamma and 1 omega subunit. When a sigma factor is associated with the core the holoenzyme is formed, which can initiate transcription.</text>
</comment>
<comment type="domain">
    <text evidence="1">The N-terminal domain is essential for RNAP assembly and basal transcription, whereas the C-terminal domain is involved in interaction with transcriptional regulators and with upstream promoter elements.</text>
</comment>
<comment type="similarity">
    <text evidence="1">Belongs to the RNA polymerase alpha chain family.</text>
</comment>
<keyword id="KW-0240">DNA-directed RNA polymerase</keyword>
<keyword id="KW-0548">Nucleotidyltransferase</keyword>
<keyword id="KW-1185">Reference proteome</keyword>
<keyword id="KW-0804">Transcription</keyword>
<keyword id="KW-0808">Transferase</keyword>
<feature type="chain" id="PRO_0000225289" description="DNA-directed RNA polymerase subunit alpha">
    <location>
        <begin position="1"/>
        <end position="312"/>
    </location>
</feature>
<feature type="region of interest" description="Alpha N-terminal domain (alpha-NTD)" evidence="1">
    <location>
        <begin position="1"/>
        <end position="229"/>
    </location>
</feature>
<feature type="region of interest" description="Alpha C-terminal domain (alpha-CTD)" evidence="1">
    <location>
        <begin position="239"/>
        <end position="312"/>
    </location>
</feature>
<reference key="1">
    <citation type="journal article" date="2007" name="PLoS Genet.">
        <title>Patterns and implications of gene gain and loss in the evolution of Prochlorococcus.</title>
        <authorList>
            <person name="Kettler G.C."/>
            <person name="Martiny A.C."/>
            <person name="Huang K."/>
            <person name="Zucker J."/>
            <person name="Coleman M.L."/>
            <person name="Rodrigue S."/>
            <person name="Chen F."/>
            <person name="Lapidus A."/>
            <person name="Ferriera S."/>
            <person name="Johnson J."/>
            <person name="Steglich C."/>
            <person name="Church G.M."/>
            <person name="Richardson P."/>
            <person name="Chisholm S.W."/>
        </authorList>
    </citation>
    <scope>NUCLEOTIDE SEQUENCE [LARGE SCALE GENOMIC DNA]</scope>
    <source>
        <strain>NATL2A</strain>
    </source>
</reference>
<organism>
    <name type="scientific">Prochlorococcus marinus (strain NATL2A)</name>
    <dbReference type="NCBI Taxonomy" id="59920"/>
    <lineage>
        <taxon>Bacteria</taxon>
        <taxon>Bacillati</taxon>
        <taxon>Cyanobacteriota</taxon>
        <taxon>Cyanophyceae</taxon>
        <taxon>Synechococcales</taxon>
        <taxon>Prochlorococcaceae</taxon>
        <taxon>Prochlorococcus</taxon>
    </lineage>
</organism>
<sequence>MLQYQIDRIDHQVSNDRSQTGVFLIGPLERGQATTLGNSLRRVLMGGLEGSAVTAVRIAGVNHEYATIPGVREDVLDILLNCKQISVDSRSQELEIGRLVVTGPADVKAKDIQFSSQVEVVDGDRPIATVQEGHNLELEIHVERGVGYRPVDRKNEETSAIDLLQIDAVFMPINRVNFTIDETAVAEGGSTRERLKMELVTDGSTSPDDALAEAANQLIELFQPLATVSMVEEIPEEPEPAAEAQIPLEELNLSVRAYNCLKRAQVNSVSDLMGFSYEDLLEIKNFGSKSADEVIEALERIGISIPQSRTSA</sequence>
<protein>
    <recommendedName>
        <fullName evidence="1">DNA-directed RNA polymerase subunit alpha</fullName>
        <shortName evidence="1">RNAP subunit alpha</shortName>
        <ecNumber evidence="1">2.7.7.6</ecNumber>
    </recommendedName>
    <alternativeName>
        <fullName evidence="1">RNA polymerase subunit alpha</fullName>
    </alternativeName>
    <alternativeName>
        <fullName evidence="1">Transcriptase subunit alpha</fullName>
    </alternativeName>
</protein>